<protein>
    <recommendedName>
        <fullName evidence="1">Probable cytosolic iron-sulfur protein assembly protein Ciao1</fullName>
    </recommendedName>
</protein>
<sequence length="331" mass="36620">MVRLILEHTLQGHKGRIWGVAWHPKGNSFASCGEDKAIRIWSLSGNTWTTKTILSDGHKRTIREVRWSPCGEYLASASFDATTAIWSKHECTATLEGHENEVKSVSWSRSGGLLATCSRDKSVWIWEVAGDDEFECAAVLNAHSQDVKRVVWHPTKEVLASASYDNTIKMFAESALDSDWDCTATLSSHTSTVWSIDFDADGERLVSCSDDATLKIWRAYHPGNDAGIATPDKTTVWKCVCTLSGEHSRAIYDVSWCKQTGLIASACGDDGIRIFKECSDSKRDAPTFELLTAEESAHEQDVNAVEWNPVTAGQLISCSDDGTIKIWKLQE</sequence>
<gene>
    <name evidence="1" type="primary">Ciao1</name>
    <name type="ORF">GJ21562</name>
</gene>
<dbReference type="EMBL" id="CH940648">
    <property type="protein sequence ID" value="EDW60596.1"/>
    <property type="molecule type" value="Genomic_DNA"/>
</dbReference>
<dbReference type="RefSeq" id="XP_002049403.1">
    <property type="nucleotide sequence ID" value="XM_002049367.4"/>
</dbReference>
<dbReference type="SMR" id="B4LJT7"/>
<dbReference type="FunCoup" id="B4LJT7">
    <property type="interactions" value="677"/>
</dbReference>
<dbReference type="STRING" id="7244.B4LJT7"/>
<dbReference type="EnsemblMetazoa" id="FBtr0237487">
    <property type="protein sequence ID" value="FBpp0235979"/>
    <property type="gene ID" value="FBgn0208682"/>
</dbReference>
<dbReference type="EnsemblMetazoa" id="XM_002049367.3">
    <property type="protein sequence ID" value="XP_002049403.1"/>
    <property type="gene ID" value="LOC6626094"/>
</dbReference>
<dbReference type="GeneID" id="6626094"/>
<dbReference type="KEGG" id="dvi:6626094"/>
<dbReference type="CTD" id="9391"/>
<dbReference type="eggNOG" id="KOG0645">
    <property type="taxonomic scope" value="Eukaryota"/>
</dbReference>
<dbReference type="HOGENOM" id="CLU_000288_57_8_1"/>
<dbReference type="InParanoid" id="B4LJT7"/>
<dbReference type="OMA" id="IREIRWS"/>
<dbReference type="OrthoDB" id="284782at2759"/>
<dbReference type="PhylomeDB" id="B4LJT7"/>
<dbReference type="Proteomes" id="UP000008792">
    <property type="component" value="Unassembled WGS sequence"/>
</dbReference>
<dbReference type="GO" id="GO:0097361">
    <property type="term" value="C:cytosolic [4Fe-4S] assembly targeting complex"/>
    <property type="evidence" value="ECO:0007669"/>
    <property type="project" value="EnsemblMetazoa"/>
</dbReference>
<dbReference type="GO" id="GO:1902695">
    <property type="term" value="C:metallochaperone complex"/>
    <property type="evidence" value="ECO:0007669"/>
    <property type="project" value="EnsemblMetazoa"/>
</dbReference>
<dbReference type="GO" id="GO:0016226">
    <property type="term" value="P:iron-sulfur cluster assembly"/>
    <property type="evidence" value="ECO:0007669"/>
    <property type="project" value="UniProtKB-UniRule"/>
</dbReference>
<dbReference type="GO" id="GO:0051604">
    <property type="term" value="P:protein maturation"/>
    <property type="evidence" value="ECO:0000250"/>
    <property type="project" value="UniProtKB"/>
</dbReference>
<dbReference type="CDD" id="cd00200">
    <property type="entry name" value="WD40"/>
    <property type="match status" value="1"/>
</dbReference>
<dbReference type="FunFam" id="2.130.10.10:FF:000136">
    <property type="entry name" value="Probable cytosolic iron-sulfur protein assembly protein CIAO1"/>
    <property type="match status" value="1"/>
</dbReference>
<dbReference type="Gene3D" id="2.130.10.10">
    <property type="entry name" value="YVTN repeat-like/Quinoprotein amine dehydrogenase"/>
    <property type="match status" value="1"/>
</dbReference>
<dbReference type="HAMAP" id="MF_03037">
    <property type="entry name" value="ciao1"/>
    <property type="match status" value="1"/>
</dbReference>
<dbReference type="InterPro" id="IPR028608">
    <property type="entry name" value="CIAO1/Cia1"/>
</dbReference>
<dbReference type="InterPro" id="IPR020472">
    <property type="entry name" value="G-protein_beta_WD-40_rep"/>
</dbReference>
<dbReference type="InterPro" id="IPR015943">
    <property type="entry name" value="WD40/YVTN_repeat-like_dom_sf"/>
</dbReference>
<dbReference type="InterPro" id="IPR019775">
    <property type="entry name" value="WD40_repeat_CS"/>
</dbReference>
<dbReference type="InterPro" id="IPR036322">
    <property type="entry name" value="WD40_repeat_dom_sf"/>
</dbReference>
<dbReference type="InterPro" id="IPR001680">
    <property type="entry name" value="WD40_rpt"/>
</dbReference>
<dbReference type="PANTHER" id="PTHR19920:SF0">
    <property type="entry name" value="CYTOSOLIC IRON-SULFUR PROTEIN ASSEMBLY PROTEIN CIAO1-RELATED"/>
    <property type="match status" value="1"/>
</dbReference>
<dbReference type="PANTHER" id="PTHR19920">
    <property type="entry name" value="WD40 PROTEIN CIAO1"/>
    <property type="match status" value="1"/>
</dbReference>
<dbReference type="Pfam" id="PF00400">
    <property type="entry name" value="WD40"/>
    <property type="match status" value="7"/>
</dbReference>
<dbReference type="PRINTS" id="PR00320">
    <property type="entry name" value="GPROTEINBRPT"/>
</dbReference>
<dbReference type="SMART" id="SM00320">
    <property type="entry name" value="WD40"/>
    <property type="match status" value="7"/>
</dbReference>
<dbReference type="SUPFAM" id="SSF50978">
    <property type="entry name" value="WD40 repeat-like"/>
    <property type="match status" value="1"/>
</dbReference>
<dbReference type="PROSITE" id="PS00678">
    <property type="entry name" value="WD_REPEATS_1"/>
    <property type="match status" value="1"/>
</dbReference>
<dbReference type="PROSITE" id="PS50082">
    <property type="entry name" value="WD_REPEATS_2"/>
    <property type="match status" value="6"/>
</dbReference>
<dbReference type="PROSITE" id="PS50294">
    <property type="entry name" value="WD_REPEATS_REGION"/>
    <property type="match status" value="1"/>
</dbReference>
<accession>B4LJT7</accession>
<evidence type="ECO:0000255" key="1">
    <source>
        <dbReference type="HAMAP-Rule" id="MF_03037"/>
    </source>
</evidence>
<name>CIAO1_DROVI</name>
<proteinExistence type="inferred from homology"/>
<feature type="chain" id="PRO_0000382492" description="Probable cytosolic iron-sulfur protein assembly protein Ciao1">
    <location>
        <begin position="1"/>
        <end position="331"/>
    </location>
</feature>
<feature type="repeat" description="WD 1">
    <location>
        <begin position="12"/>
        <end position="51"/>
    </location>
</feature>
<feature type="repeat" description="WD 2">
    <location>
        <begin position="57"/>
        <end position="96"/>
    </location>
</feature>
<feature type="repeat" description="WD 3">
    <location>
        <begin position="97"/>
        <end position="136"/>
    </location>
</feature>
<feature type="repeat" description="WD 4">
    <location>
        <begin position="142"/>
        <end position="181"/>
    </location>
</feature>
<feature type="repeat" description="WD 5">
    <location>
        <begin position="188"/>
        <end position="227"/>
    </location>
</feature>
<feature type="repeat" description="WD 6">
    <location>
        <begin position="246"/>
        <end position="285"/>
    </location>
</feature>
<feature type="repeat" description="WD 7">
    <location>
        <begin position="297"/>
        <end position="331"/>
    </location>
</feature>
<reference key="1">
    <citation type="journal article" date="2007" name="Nature">
        <title>Evolution of genes and genomes on the Drosophila phylogeny.</title>
        <authorList>
            <consortium name="Drosophila 12 genomes consortium"/>
        </authorList>
    </citation>
    <scope>NUCLEOTIDE SEQUENCE [LARGE SCALE GENOMIC DNA]</scope>
    <source>
        <strain>Tucson 15010-1051.87</strain>
    </source>
</reference>
<organism>
    <name type="scientific">Drosophila virilis</name>
    <name type="common">Fruit fly</name>
    <dbReference type="NCBI Taxonomy" id="7244"/>
    <lineage>
        <taxon>Eukaryota</taxon>
        <taxon>Metazoa</taxon>
        <taxon>Ecdysozoa</taxon>
        <taxon>Arthropoda</taxon>
        <taxon>Hexapoda</taxon>
        <taxon>Insecta</taxon>
        <taxon>Pterygota</taxon>
        <taxon>Neoptera</taxon>
        <taxon>Endopterygota</taxon>
        <taxon>Diptera</taxon>
        <taxon>Brachycera</taxon>
        <taxon>Muscomorpha</taxon>
        <taxon>Ephydroidea</taxon>
        <taxon>Drosophilidae</taxon>
        <taxon>Drosophila</taxon>
    </lineage>
</organism>
<comment type="function">
    <text evidence="1">Essential component of the cytosolic iron-sulfur (Fe/S) protein assembly machinery. Required for the maturation of extramitochondrial Fe/S proteins.</text>
</comment>
<comment type="similarity">
    <text evidence="1">Belongs to the WD repeat CIA1 family.</text>
</comment>
<keyword id="KW-1185">Reference proteome</keyword>
<keyword id="KW-0677">Repeat</keyword>
<keyword id="KW-0853">WD repeat</keyword>